<evidence type="ECO:0000269" key="1">
    <source>
    </source>
</evidence>
<evidence type="ECO:0000269" key="2">
    <source>
    </source>
</evidence>
<evidence type="ECO:0000269" key="3">
    <source>
    </source>
</evidence>
<evidence type="ECO:0000303" key="4">
    <source>
    </source>
</evidence>
<evidence type="ECO:0000305" key="5"/>
<evidence type="ECO:0000305" key="6">
    <source>
    </source>
</evidence>
<evidence type="ECO:0000305" key="7">
    <source>
    </source>
</evidence>
<feature type="chain" id="PRO_0000446124" description="CRISPR system Cms protein Csm5">
    <location>
        <begin position="1"/>
        <end position="357"/>
    </location>
</feature>
<proteinExistence type="evidence at protein level"/>
<protein>
    <recommendedName>
        <fullName>CRISPR system Cms protein Csm5</fullName>
    </recommendedName>
    <alternativeName>
        <fullName>CRISPR type III A-associated protein Csm5</fullName>
    </alternativeName>
</protein>
<gene>
    <name evidence="4" type="primary">csm5</name>
</gene>
<name>CSM5_STRTR</name>
<dbReference type="EMBL" id="KM222358">
    <property type="protein sequence ID" value="AIZ03608.1"/>
    <property type="molecule type" value="Genomic_DNA"/>
</dbReference>
<dbReference type="RefSeq" id="WP_014621550.1">
    <property type="nucleotide sequence ID" value="NZ_JAIZBW010000015.1"/>
</dbReference>
<dbReference type="SMR" id="A0A0A7HF79"/>
<dbReference type="GO" id="GO:0003723">
    <property type="term" value="F:RNA binding"/>
    <property type="evidence" value="ECO:0007669"/>
    <property type="project" value="UniProtKB-KW"/>
</dbReference>
<dbReference type="GO" id="GO:0051607">
    <property type="term" value="P:defense response to virus"/>
    <property type="evidence" value="ECO:0007669"/>
    <property type="project" value="UniProtKB-KW"/>
</dbReference>
<dbReference type="InterPro" id="IPR010173">
    <property type="entry name" value="CRISPR-assoc_Csm5"/>
</dbReference>
<dbReference type="InterPro" id="IPR005537">
    <property type="entry name" value="RAMP_III_fam"/>
</dbReference>
<dbReference type="NCBIfam" id="TIGR01899">
    <property type="entry name" value="cas_TM1807_csm5"/>
    <property type="match status" value="1"/>
</dbReference>
<dbReference type="PANTHER" id="PTHR38007">
    <property type="entry name" value="CRISPR SYSTEM CMS PROTEIN CSM5"/>
    <property type="match status" value="1"/>
</dbReference>
<dbReference type="PANTHER" id="PTHR38007:SF1">
    <property type="entry name" value="CRISPR SYSTEM CMS PROTEIN CSM5"/>
    <property type="match status" value="1"/>
</dbReference>
<dbReference type="Pfam" id="PF03787">
    <property type="entry name" value="RAMPs"/>
    <property type="match status" value="1"/>
</dbReference>
<reference key="1">
    <citation type="journal article" date="2014" name="Mol. Cell">
        <title>Programmable RNA shredding by the type III-A CRISPR-Cas system of Streptococcus thermophilus.</title>
        <authorList>
            <person name="Tamulaitis G."/>
            <person name="Kazlauskiene M."/>
            <person name="Manakova E."/>
            <person name="Venclovas C."/>
            <person name="Nwokeoji A.O."/>
            <person name="Dickman M.J."/>
            <person name="Horvath P."/>
            <person name="Siksnys V."/>
        </authorList>
    </citation>
    <scope>NUCLEOTIDE SEQUENCE [GENOMIC DNA]</scope>
    <scope>FUNCTION IN PHAGE RESISTANCE</scope>
    <scope>TARGETS SSRNA</scope>
    <scope>SUBUNIT</scope>
    <scope>ANTIVIRAL DEFENSE</scope>
    <source>
        <strain>DGCC8004</strain>
    </source>
</reference>
<reference key="2">
    <citation type="journal article" date="2016" name="Mol. Cell">
        <title>Spatiotemporal control of type III-A CRISPR-Cas immunity: coupling DNA degradation with the target RNA recognition.</title>
        <authorList>
            <person name="Kazlauskiene M."/>
            <person name="Tamulaitis G."/>
            <person name="Kostiuk G."/>
            <person name="Venclovas C."/>
            <person name="Siksnys V."/>
        </authorList>
    </citation>
    <scope>SUBUNIT</scope>
    <source>
        <strain>DGCC8004</strain>
    </source>
</reference>
<reference key="3">
    <citation type="journal article" date="2017" name="Science">
        <title>A cyclic oligonucleotide signaling pathway in type III CRISPR-Cas systems.</title>
        <authorList>
            <person name="Kazlauskiene M."/>
            <person name="Kostiuk G."/>
            <person name="Venclovas C."/>
            <person name="Tamulaitis G."/>
            <person name="Siksnys V."/>
        </authorList>
    </citation>
    <scope>SUBUNIT</scope>
    <source>
        <strain>DGCC8004</strain>
    </source>
</reference>
<organism>
    <name type="scientific">Streptococcus thermophilus</name>
    <dbReference type="NCBI Taxonomy" id="1308"/>
    <lineage>
        <taxon>Bacteria</taxon>
        <taxon>Bacillati</taxon>
        <taxon>Bacillota</taxon>
        <taxon>Bacilli</taxon>
        <taxon>Lactobacillales</taxon>
        <taxon>Streptococcaceae</taxon>
        <taxon>Streptococcus</taxon>
    </lineage>
</organism>
<sequence>MKNDYRTFKLSLLTLAPIHIGNGEKYTSREFIYENKKFYFPDMGKFYNKMVEKRLAEKFEAFLIQTRPNARNNRLISFLNDNRIAERSFGGYSISETGLESDRNPNSAGAINEVNKFIRDAFGNPYIPGSSLKGAIRTILMNTTPKWNNENAVNDFGRFPKENKNLIPWGPKKGKEYDDLFNAIRVSDSKPFDNKRLILVQKWDYSAKTNKAKPLPLYRESISPLTKIEFEITTTTDEAGRLIEELGKRAQAFYKDYKAFFLSEFPDDKIQANLQYPIYLGAGSGAWTKTLFKQADGILQRRYSRMKTKMVKKGVLKLTKAPLKIVKIPSGNHSLIKNHESFYEMGKANFMIKEIDK</sequence>
<comment type="function">
    <text evidence="1">CRISPR (clustered regularly interspaced short palindromic repeat) is an adaptive immune system that provides protection against mobile genetic elements (viruses, transposable elements and conjugative plasmids). CRISPR clusters contain spacers, sequences complementary to antecedent mobile elements, and target invading nucleic acids. CRISPR clusters are transcribed and processed into CRISPR RNA (crRNA). The type III-A Csm effector complex binds crRNA and acts as a crRNA-guided RNase, DNase and cyclic oligoadenylate synthase; binding of target RNA cognate to the crRNA is required for all activities. In a heterologous host this Csm effector complex restricts ssRNA phage MS2, suggesting it may target RNA viruses in vivo.</text>
</comment>
<comment type="function">
    <text evidence="2">Csm functions as a non-specific ssDNase. Base-pairing between crRNA and target RNA to form a ternary Csm complex activates a ssDNase activity; target RNA cleavage suppresses the ssDNase, a temporal control that prevents uncontrolled DNA degradation. Viral RNA transcripts probably tether the Csm complex to the viral genome, recruiting Cas10 ssDNA activity which is able to degrade DNA in the transcription bubble, spatially controlling the DNase activity.</text>
</comment>
<comment type="function">
    <text evidence="6">This subunit might be involved in maturation of a crRNA intermediate to its mature form.</text>
</comment>
<comment type="subunit">
    <text evidence="1 2 3 6 7">Part of the Csm effector complex that includes at least Cas10(1), Csm2(3), Csm3(5), Csm4(1), Csm5(1) and mature crRNA (PubMed:25458845, PubMed:27105119, PubMed:28663439). The Csm complex is elongated and slightly twisted with a maximal length of 215 Angstroms and a diameter of 75-80 Angstroms (PubMed:25458845). It has been modeled to have a central protein filamant of Csm3 subunits along which the dsRNA helix of paired crRNA and target RNA binds. The filament is capped at one end by Cas10 and Csm4 and at the other end by Csm5; ssDNA is thought to bind to the N-terminal HD domain of Cas10 (Probable). Csm with a precursor crRNA does not include Csm5, while Cas6, the enzyme probably involved in pre-crRNA processing, is found associated with a subset of the Csm complex (PubMed:25458845).</text>
</comment>
<comment type="miscellaneous">
    <text evidence="1">Encoded in a type III-A CRISPR locus.</text>
</comment>
<comment type="similarity">
    <text evidence="5">Belongs to the CRISPR-associated Csm5 family.</text>
</comment>
<accession>A0A0A7HF79</accession>
<keyword id="KW-0051">Antiviral defense</keyword>
<keyword id="KW-0694">RNA-binding</keyword>